<reference key="1">
    <citation type="submission" date="2000-06" db="EMBL/GenBank/DDBJ databases">
        <title>Structural analysis of Arabidopsis thaliana chromosome 5. XI.</title>
        <authorList>
            <person name="Kaneko T."/>
            <person name="Katoh T."/>
            <person name="Asamizu E."/>
            <person name="Sato S."/>
            <person name="Nakamura Y."/>
            <person name="Kotani H."/>
            <person name="Tabata S."/>
        </authorList>
    </citation>
    <scope>NUCLEOTIDE SEQUENCE [LARGE SCALE GENOMIC DNA]</scope>
    <source>
        <strain>cv. Columbia</strain>
    </source>
</reference>
<reference key="2">
    <citation type="journal article" date="2017" name="Plant J.">
        <title>Araport11: a complete reannotation of the Arabidopsis thaliana reference genome.</title>
        <authorList>
            <person name="Cheng C.Y."/>
            <person name="Krishnakumar V."/>
            <person name="Chan A.P."/>
            <person name="Thibaud-Nissen F."/>
            <person name="Schobel S."/>
            <person name="Town C.D."/>
        </authorList>
    </citation>
    <scope>GENOME REANNOTATION</scope>
    <source>
        <strain>cv. Columbia</strain>
    </source>
</reference>
<reference key="3">
    <citation type="journal article" date="2003" name="Science">
        <title>Empirical analysis of transcriptional activity in the Arabidopsis genome.</title>
        <authorList>
            <person name="Yamada K."/>
            <person name="Lim J."/>
            <person name="Dale J.M."/>
            <person name="Chen H."/>
            <person name="Shinn P."/>
            <person name="Palm C.J."/>
            <person name="Southwick A.M."/>
            <person name="Wu H.C."/>
            <person name="Kim C.J."/>
            <person name="Nguyen M."/>
            <person name="Pham P.K."/>
            <person name="Cheuk R.F."/>
            <person name="Karlin-Newmann G."/>
            <person name="Liu S.X."/>
            <person name="Lam B."/>
            <person name="Sakano H."/>
            <person name="Wu T."/>
            <person name="Yu G."/>
            <person name="Miranda M."/>
            <person name="Quach H.L."/>
            <person name="Tripp M."/>
            <person name="Chang C.H."/>
            <person name="Lee J.M."/>
            <person name="Toriumi M.J."/>
            <person name="Chan M.M."/>
            <person name="Tang C.C."/>
            <person name="Onodera C.S."/>
            <person name="Deng J.M."/>
            <person name="Akiyama K."/>
            <person name="Ansari Y."/>
            <person name="Arakawa T."/>
            <person name="Banh J."/>
            <person name="Banno F."/>
            <person name="Bowser L."/>
            <person name="Brooks S.Y."/>
            <person name="Carninci P."/>
            <person name="Chao Q."/>
            <person name="Choy N."/>
            <person name="Enju A."/>
            <person name="Goldsmith A.D."/>
            <person name="Gurjal M."/>
            <person name="Hansen N.F."/>
            <person name="Hayashizaki Y."/>
            <person name="Johnson-Hopson C."/>
            <person name="Hsuan V.W."/>
            <person name="Iida K."/>
            <person name="Karnes M."/>
            <person name="Khan S."/>
            <person name="Koesema E."/>
            <person name="Ishida J."/>
            <person name="Jiang P.X."/>
            <person name="Jones T."/>
            <person name="Kawai J."/>
            <person name="Kamiya A."/>
            <person name="Meyers C."/>
            <person name="Nakajima M."/>
            <person name="Narusaka M."/>
            <person name="Seki M."/>
            <person name="Sakurai T."/>
            <person name="Satou M."/>
            <person name="Tamse R."/>
            <person name="Vaysberg M."/>
            <person name="Wallender E.K."/>
            <person name="Wong C."/>
            <person name="Yamamura Y."/>
            <person name="Yuan S."/>
            <person name="Shinozaki K."/>
            <person name="Davis R.W."/>
            <person name="Theologis A."/>
            <person name="Ecker J.R."/>
        </authorList>
    </citation>
    <scope>NUCLEOTIDE SEQUENCE [LARGE SCALE MRNA]</scope>
    <source>
        <strain>cv. Columbia</strain>
    </source>
</reference>
<reference key="4">
    <citation type="journal article" date="2009" name="Plant Physiol.">
        <title>Large-scale Arabidopsis phosphoproteome profiling reveals novel chloroplast kinase substrates and phosphorylation networks.</title>
        <authorList>
            <person name="Reiland S."/>
            <person name="Messerli G."/>
            <person name="Baerenfaller K."/>
            <person name="Gerrits B."/>
            <person name="Endler A."/>
            <person name="Grossmann J."/>
            <person name="Gruissem W."/>
            <person name="Baginsky S."/>
        </authorList>
    </citation>
    <scope>PHOSPHORYLATION [LARGE SCALE ANALYSIS] AT SER-385</scope>
    <scope>IDENTIFICATION BY MASS SPECTROMETRY [LARGE SCALE ANALYSIS]</scope>
</reference>
<reference key="5">
    <citation type="journal article" date="2013" name="Plant Cell">
        <title>Identification of myosin XI receptors in Arabidopsis defines a distinct class of transport vesicles.</title>
        <authorList>
            <person name="Peremyslov V.V."/>
            <person name="Morgun E.A."/>
            <person name="Kurth E.G."/>
            <person name="Makarova K.S."/>
            <person name="Koonin E.V."/>
            <person name="Dolja V.V."/>
        </authorList>
    </citation>
    <scope>FUNCTION</scope>
    <scope>INTERACTION WITH XI-I</scope>
    <scope>DOMAIN</scope>
    <scope>SUBCELLULAR LOCATION</scope>
</reference>
<keyword id="KW-0175">Coiled coil</keyword>
<keyword id="KW-0472">Membrane</keyword>
<keyword id="KW-0597">Phosphoprotein</keyword>
<keyword id="KW-1185">Reference proteome</keyword>
<keyword id="KW-0812">Transmembrane</keyword>
<keyword id="KW-1133">Transmembrane helix</keyword>
<accession>Q9FG14</accession>
<sequence>MDLAIVSSPTRDVVRCCDCGCDCSLNGASPGSLLRSVKRKYEEFENEKLFHIPELELDLSSNAKVQIENELELLRETVSSQQQSIQDLYEELDEERNAASTAASEAMSMILRLQRDKAELQMELRQFKRFAEEKMEHDQQELLDLEDLIYKREQTIQALTFEAQAYKHRMMSFGFTEAEVETEKNMLSRNPSMIENDYQYDLPTSDYPPIKCNVNENPGPLEADIDVDDVEKYPLADSPHPLKTLERRISQMERNPSFTQPTGDVSGGRHYTEKNVVGQSPRHQRHFRRVSTGSASSLLGTTREKRLDFSNDSPRSNNGSFRKMEDPPYAAGNSFARDKGDSSEIGDNDMNDRVYTIDSVHHSVSHSGTAEQKFKNDTADGYAMSPREISNQPDLGDPEISKLYMRLQALEADRESMRQAIMSMRTEKAQMVLLKEIAQHLSKDVVPERRLPLRKTSIIGAFNFISVFKWITSFVFWRRKARRSKYMNGVQGNNMGLQMLLEKTPRIRQWRCLSSTQV</sequence>
<dbReference type="EMBL" id="AP002543">
    <property type="protein sequence ID" value="BAB11405.1"/>
    <property type="molecule type" value="Genomic_DNA"/>
</dbReference>
<dbReference type="EMBL" id="CP002688">
    <property type="protein sequence ID" value="AED91034.1"/>
    <property type="molecule type" value="Genomic_DNA"/>
</dbReference>
<dbReference type="EMBL" id="AF360288">
    <property type="protein sequence ID" value="AAK25998.1"/>
    <property type="molecule type" value="mRNA"/>
</dbReference>
<dbReference type="EMBL" id="AY051044">
    <property type="protein sequence ID" value="AAK93721.1"/>
    <property type="molecule type" value="mRNA"/>
</dbReference>
<dbReference type="RefSeq" id="NP_196274.1">
    <property type="nucleotide sequence ID" value="NM_120739.3"/>
</dbReference>
<dbReference type="SMR" id="Q9FG14"/>
<dbReference type="FunCoup" id="Q9FG14">
    <property type="interactions" value="1839"/>
</dbReference>
<dbReference type="IntAct" id="Q9FG14">
    <property type="interactions" value="1"/>
</dbReference>
<dbReference type="STRING" id="3702.Q9FG14"/>
<dbReference type="iPTMnet" id="Q9FG14"/>
<dbReference type="PaxDb" id="3702-AT5G06560.1"/>
<dbReference type="ProteomicsDB" id="248922"/>
<dbReference type="EnsemblPlants" id="AT5G06560.1">
    <property type="protein sequence ID" value="AT5G06560.1"/>
    <property type="gene ID" value="AT5G06560"/>
</dbReference>
<dbReference type="GeneID" id="830544"/>
<dbReference type="Gramene" id="AT5G06560.1">
    <property type="protein sequence ID" value="AT5G06560.1"/>
    <property type="gene ID" value="AT5G06560"/>
</dbReference>
<dbReference type="KEGG" id="ath:AT5G06560"/>
<dbReference type="Araport" id="AT5G06560"/>
<dbReference type="TAIR" id="AT5G06560">
    <property type="gene designation" value="MYOB7"/>
</dbReference>
<dbReference type="eggNOG" id="ENOG502R5YD">
    <property type="taxonomic scope" value="Eukaryota"/>
</dbReference>
<dbReference type="HOGENOM" id="CLU_026752_1_0_1"/>
<dbReference type="InParanoid" id="Q9FG14"/>
<dbReference type="OMA" id="VVRCCDC"/>
<dbReference type="OrthoDB" id="1060521at2759"/>
<dbReference type="PhylomeDB" id="Q9FG14"/>
<dbReference type="PRO" id="PR:Q9FG14"/>
<dbReference type="Proteomes" id="UP000006548">
    <property type="component" value="Chromosome 5"/>
</dbReference>
<dbReference type="ExpressionAtlas" id="Q9FG14">
    <property type="expression patterns" value="baseline and differential"/>
</dbReference>
<dbReference type="GO" id="GO:0016020">
    <property type="term" value="C:membrane"/>
    <property type="evidence" value="ECO:0000314"/>
    <property type="project" value="UniProtKB"/>
</dbReference>
<dbReference type="GO" id="GO:0030133">
    <property type="term" value="C:transport vesicle"/>
    <property type="evidence" value="ECO:0000314"/>
    <property type="project" value="UniProtKB"/>
</dbReference>
<dbReference type="GO" id="GO:0017022">
    <property type="term" value="F:myosin binding"/>
    <property type="evidence" value="ECO:0000353"/>
    <property type="project" value="UniProtKB"/>
</dbReference>
<dbReference type="GO" id="GO:0080115">
    <property type="term" value="F:myosin XI tail binding"/>
    <property type="evidence" value="ECO:0000314"/>
    <property type="project" value="TAIR"/>
</dbReference>
<dbReference type="InterPro" id="IPR007656">
    <property type="entry name" value="GTD-bd"/>
</dbReference>
<dbReference type="PANTHER" id="PTHR31422">
    <property type="entry name" value="BNAANNG28530D PROTEIN"/>
    <property type="match status" value="1"/>
</dbReference>
<dbReference type="PANTHER" id="PTHR31422:SF0">
    <property type="entry name" value="MYOSIN-BINDING PROTEIN 7"/>
    <property type="match status" value="1"/>
</dbReference>
<dbReference type="Pfam" id="PF04576">
    <property type="entry name" value="Zein-binding"/>
    <property type="match status" value="1"/>
</dbReference>
<dbReference type="PROSITE" id="PS51775">
    <property type="entry name" value="GTD_BINDING"/>
    <property type="match status" value="1"/>
</dbReference>
<proteinExistence type="evidence at protein level"/>
<organism evidence="7">
    <name type="scientific">Arabidopsis thaliana</name>
    <name type="common">Mouse-ear cress</name>
    <dbReference type="NCBI Taxonomy" id="3702"/>
    <lineage>
        <taxon>Eukaryota</taxon>
        <taxon>Viridiplantae</taxon>
        <taxon>Streptophyta</taxon>
        <taxon>Embryophyta</taxon>
        <taxon>Tracheophyta</taxon>
        <taxon>Spermatophyta</taxon>
        <taxon>Magnoliopsida</taxon>
        <taxon>eudicotyledons</taxon>
        <taxon>Gunneridae</taxon>
        <taxon>Pentapetalae</taxon>
        <taxon>rosids</taxon>
        <taxon>malvids</taxon>
        <taxon>Brassicales</taxon>
        <taxon>Brassicaceae</taxon>
        <taxon>Camelineae</taxon>
        <taxon>Arabidopsis</taxon>
    </lineage>
</organism>
<feature type="chain" id="PRO_0000431713" description="Myosin-binding protein 7">
    <location>
        <begin position="1"/>
        <end position="518"/>
    </location>
</feature>
<feature type="transmembrane region" description="Helical" evidence="1">
    <location>
        <begin position="458"/>
        <end position="477"/>
    </location>
</feature>
<feature type="domain" description="GTD-binding" evidence="2">
    <location>
        <begin position="69"/>
        <end position="167"/>
    </location>
</feature>
<feature type="region of interest" description="Disordered" evidence="3">
    <location>
        <begin position="276"/>
        <end position="350"/>
    </location>
</feature>
<feature type="coiled-coil region" evidence="1">
    <location>
        <begin position="399"/>
        <end position="431"/>
    </location>
</feature>
<feature type="compositionally biased region" description="Low complexity" evidence="3">
    <location>
        <begin position="291"/>
        <end position="301"/>
    </location>
</feature>
<feature type="compositionally biased region" description="Polar residues" evidence="3">
    <location>
        <begin position="310"/>
        <end position="320"/>
    </location>
</feature>
<feature type="modified residue" description="Phosphoserine" evidence="8">
    <location>
        <position position="385"/>
    </location>
</feature>
<name>MYOB7_ARATH</name>
<gene>
    <name evidence="5" type="primary">MYOB7</name>
    <name evidence="6" type="ordered locus">At5g06560</name>
    <name evidence="7" type="ORF">F15M7.9</name>
</gene>
<protein>
    <recommendedName>
        <fullName evidence="5">Myosin-binding protein 7</fullName>
    </recommendedName>
</protein>
<evidence type="ECO:0000255" key="1"/>
<evidence type="ECO:0000255" key="2">
    <source>
        <dbReference type="PROSITE-ProRule" id="PRU01111"/>
    </source>
</evidence>
<evidence type="ECO:0000256" key="3">
    <source>
        <dbReference type="SAM" id="MobiDB-lite"/>
    </source>
</evidence>
<evidence type="ECO:0000269" key="4">
    <source>
    </source>
</evidence>
<evidence type="ECO:0000303" key="5">
    <source>
    </source>
</evidence>
<evidence type="ECO:0000312" key="6">
    <source>
        <dbReference type="Araport" id="AT5G06560"/>
    </source>
</evidence>
<evidence type="ECO:0000312" key="7">
    <source>
        <dbReference type="EMBL" id="BAB11405.1"/>
    </source>
</evidence>
<evidence type="ECO:0007744" key="8">
    <source>
    </source>
</evidence>
<comment type="function">
    <text evidence="4">Membrane-anchored myosin receptors that define a distinct, plant-specific transport vesicle compartment.</text>
</comment>
<comment type="subunit">
    <text evidence="4">Interacts with myosin XI-I.</text>
</comment>
<comment type="subcellular location">
    <subcellularLocation>
        <location evidence="4">Endomembrane system</location>
        <topology evidence="1">Single-pass membrane protein</topology>
    </subcellularLocation>
</comment>
<comment type="domain">
    <text evidence="4">The GTD-binding domain is sufficient for myosin binding.</text>
</comment>